<geneLocation type="mitochondrion"/>
<gene>
    <name type="primary">ATP9</name>
    <name type="ordered locus">AMI007W</name>
    <name type="ORF">AgATP9</name>
</gene>
<feature type="chain" id="PRO_0000112230" description="ATP synthase subunit 9, mitochondrial">
    <location>
        <begin position="1"/>
        <end position="76"/>
    </location>
</feature>
<feature type="transmembrane region" description="Helical" evidence="2">
    <location>
        <begin position="13"/>
        <end position="35"/>
    </location>
</feature>
<feature type="transmembrane region" description="Helical" evidence="2">
    <location>
        <begin position="50"/>
        <end position="72"/>
    </location>
</feature>
<feature type="site" description="Reversibly protonated during proton transport" evidence="1">
    <location>
        <position position="59"/>
    </location>
</feature>
<accession>Q75G38</accession>
<name>ATP9_EREGS</name>
<comment type="function">
    <text>Mitochondrial membrane ATP synthase (F(1)F(0) ATP synthase or Complex V) produces ATP from ADP in the presence of a proton gradient across the membrane which is generated by electron transport complexes of the respiratory chain. F-type ATPases consist of two structural domains, F(1) - containing the extramembraneous catalytic core and F(0) - containing the membrane proton channel, linked together by a central stalk and a peripheral stalk. During catalysis, ATP synthesis in the catalytic domain of F(1) is coupled via a rotary mechanism of the central stalk subunits to proton translocation. Part of the complex F(0) domain. A homomeric c-ring of probably 10 subunits is part of the complex rotary element.</text>
</comment>
<comment type="subunit">
    <text>F-type ATPases have 2 components, CF(1) - the catalytic core - and CF(0) - the membrane proton channel. In yeast, the dimeric form of ATP synthase consists of 18 polypeptides: alpha, beta, gamma, delta, epsilon, 4 (B), 5 (OSCP), 6 (A), 8, 9 (C), d, E (Tim11), f, g, h, i, j and k.</text>
</comment>
<comment type="subcellular location">
    <subcellularLocation>
        <location evidence="3">Mitochondrion membrane</location>
        <topology evidence="3">Multi-pass membrane protein</topology>
    </subcellularLocation>
</comment>
<comment type="similarity">
    <text evidence="3">Belongs to the ATPase C chain family.</text>
</comment>
<dbReference type="EMBL" id="AE016821">
    <property type="protein sequence ID" value="AAS50174.1"/>
    <property type="molecule type" value="Genomic_DNA"/>
</dbReference>
<dbReference type="RefSeq" id="NP_987084.1">
    <property type="nucleotide sequence ID" value="NC_005789.1"/>
</dbReference>
<dbReference type="SMR" id="Q75G38"/>
<dbReference type="FunCoup" id="Q75G38">
    <property type="interactions" value="852"/>
</dbReference>
<dbReference type="STRING" id="284811.Q75G38"/>
<dbReference type="EnsemblFungi" id="AAS50174">
    <property type="protein sequence ID" value="AAS50174"/>
    <property type="gene ID" value="AGOS_AMI007W"/>
</dbReference>
<dbReference type="GeneID" id="2760770"/>
<dbReference type="KEGG" id="ago:AGOS_AMI007W"/>
<dbReference type="eggNOG" id="KOG3025">
    <property type="taxonomic scope" value="Eukaryota"/>
</dbReference>
<dbReference type="HOGENOM" id="CLU_148047_4_1_1"/>
<dbReference type="InParanoid" id="Q75G38"/>
<dbReference type="OMA" id="YIFGKMI"/>
<dbReference type="OrthoDB" id="438052at2759"/>
<dbReference type="Proteomes" id="UP000000591">
    <property type="component" value="Mitochondrion"/>
</dbReference>
<dbReference type="GO" id="GO:0005743">
    <property type="term" value="C:mitochondrial inner membrane"/>
    <property type="evidence" value="ECO:0007669"/>
    <property type="project" value="EnsemblFungi"/>
</dbReference>
<dbReference type="GO" id="GO:0045259">
    <property type="term" value="C:proton-transporting ATP synthase complex"/>
    <property type="evidence" value="ECO:0007669"/>
    <property type="project" value="UniProtKB-KW"/>
</dbReference>
<dbReference type="GO" id="GO:0033177">
    <property type="term" value="C:proton-transporting two-sector ATPase complex, proton-transporting domain"/>
    <property type="evidence" value="ECO:0007669"/>
    <property type="project" value="InterPro"/>
</dbReference>
<dbReference type="GO" id="GO:0016887">
    <property type="term" value="F:ATP hydrolysis activity"/>
    <property type="evidence" value="ECO:0007669"/>
    <property type="project" value="EnsemblFungi"/>
</dbReference>
<dbReference type="GO" id="GO:0042802">
    <property type="term" value="F:identical protein binding"/>
    <property type="evidence" value="ECO:0007669"/>
    <property type="project" value="EnsemblFungi"/>
</dbReference>
<dbReference type="GO" id="GO:0008289">
    <property type="term" value="F:lipid binding"/>
    <property type="evidence" value="ECO:0007669"/>
    <property type="project" value="UniProtKB-KW"/>
</dbReference>
<dbReference type="GO" id="GO:0046933">
    <property type="term" value="F:proton-transporting ATP synthase activity, rotational mechanism"/>
    <property type="evidence" value="ECO:0007669"/>
    <property type="project" value="EnsemblFungi"/>
</dbReference>
<dbReference type="GO" id="GO:0015986">
    <property type="term" value="P:proton motive force-driven ATP synthesis"/>
    <property type="evidence" value="ECO:0000318"/>
    <property type="project" value="GO_Central"/>
</dbReference>
<dbReference type="CDD" id="cd18182">
    <property type="entry name" value="ATP-synt_Fo_c_ATP5G3"/>
    <property type="match status" value="1"/>
</dbReference>
<dbReference type="FunFam" id="1.20.20.10:FF:000014">
    <property type="entry name" value="ATP synthase subunit 9, mitochondrial"/>
    <property type="match status" value="1"/>
</dbReference>
<dbReference type="Gene3D" id="1.20.20.10">
    <property type="entry name" value="F1F0 ATP synthase subunit C"/>
    <property type="match status" value="1"/>
</dbReference>
<dbReference type="HAMAP" id="MF_01396">
    <property type="entry name" value="ATP_synth_c_bact"/>
    <property type="match status" value="1"/>
</dbReference>
<dbReference type="InterPro" id="IPR000454">
    <property type="entry name" value="ATP_synth_F0_csu"/>
</dbReference>
<dbReference type="InterPro" id="IPR020537">
    <property type="entry name" value="ATP_synth_F0_csu_DDCD_BS"/>
</dbReference>
<dbReference type="InterPro" id="IPR038662">
    <property type="entry name" value="ATP_synth_F0_csu_sf"/>
</dbReference>
<dbReference type="InterPro" id="IPR002379">
    <property type="entry name" value="ATPase_proteolipid_c-like_dom"/>
</dbReference>
<dbReference type="InterPro" id="IPR035921">
    <property type="entry name" value="F/V-ATP_Csub_sf"/>
</dbReference>
<dbReference type="PANTHER" id="PTHR10031">
    <property type="entry name" value="ATP SYNTHASE LIPID-BINDING PROTEIN, MITOCHONDRIAL"/>
    <property type="match status" value="1"/>
</dbReference>
<dbReference type="PANTHER" id="PTHR10031:SF0">
    <property type="entry name" value="ATPASE PROTEIN 9"/>
    <property type="match status" value="1"/>
</dbReference>
<dbReference type="Pfam" id="PF00137">
    <property type="entry name" value="ATP-synt_C"/>
    <property type="match status" value="1"/>
</dbReference>
<dbReference type="PRINTS" id="PR00124">
    <property type="entry name" value="ATPASEC"/>
</dbReference>
<dbReference type="SUPFAM" id="SSF81333">
    <property type="entry name" value="F1F0 ATP synthase subunit C"/>
    <property type="match status" value="1"/>
</dbReference>
<dbReference type="PROSITE" id="PS00605">
    <property type="entry name" value="ATPASE_C"/>
    <property type="match status" value="1"/>
</dbReference>
<reference key="1">
    <citation type="journal article" date="2004" name="Science">
        <title>The Ashbya gossypii genome as a tool for mapping the ancient Saccharomyces cerevisiae genome.</title>
        <authorList>
            <person name="Dietrich F.S."/>
            <person name="Voegeli S."/>
            <person name="Brachat S."/>
            <person name="Lerch A."/>
            <person name="Gates K."/>
            <person name="Steiner S."/>
            <person name="Mohr C."/>
            <person name="Poehlmann R."/>
            <person name="Luedi P."/>
            <person name="Choi S."/>
            <person name="Wing R.A."/>
            <person name="Flavier A."/>
            <person name="Gaffney T.D."/>
            <person name="Philippsen P."/>
        </authorList>
    </citation>
    <scope>NUCLEOTIDE SEQUENCE [LARGE SCALE GENOMIC DNA]</scope>
    <source>
        <strain>ATCC 10895 / CBS 109.51 / FGSC 9923 / NRRL Y-1056</strain>
    </source>
</reference>
<reference key="2">
    <citation type="journal article" date="2013" name="G3 (Bethesda)">
        <title>Genomes of Ashbya fungi isolated from insects reveal four mating-type loci, numerous translocations, lack of transposons, and distinct gene duplications.</title>
        <authorList>
            <person name="Dietrich F.S."/>
            <person name="Voegeli S."/>
            <person name="Kuo S."/>
            <person name="Philippsen P."/>
        </authorList>
    </citation>
    <scope>GENOME REANNOTATION</scope>
    <source>
        <strain>ATCC 10895 / CBS 109.51 / FGSC 9923 / NRRL Y-1056</strain>
    </source>
</reference>
<keyword id="KW-0138">CF(0)</keyword>
<keyword id="KW-0375">Hydrogen ion transport</keyword>
<keyword id="KW-0406">Ion transport</keyword>
<keyword id="KW-0446">Lipid-binding</keyword>
<keyword id="KW-0472">Membrane</keyword>
<keyword id="KW-0496">Mitochondrion</keyword>
<keyword id="KW-1185">Reference proteome</keyword>
<keyword id="KW-0812">Transmembrane</keyword>
<keyword id="KW-1133">Transmembrane helix</keyword>
<keyword id="KW-0813">Transport</keyword>
<evidence type="ECO:0000250" key="1"/>
<evidence type="ECO:0000255" key="2"/>
<evidence type="ECO:0000305" key="3"/>
<sequence>MQLVLAAKYIGAGISTIGLLGAGIGIAIVFAALIQGVSRNPSMKDTLFQFAILGFAISEATGLFCLMISFLLLYGV</sequence>
<proteinExistence type="inferred from homology"/>
<organism>
    <name type="scientific">Eremothecium gossypii (strain ATCC 10895 / CBS 109.51 / FGSC 9923 / NRRL Y-1056)</name>
    <name type="common">Yeast</name>
    <name type="synonym">Ashbya gossypii</name>
    <dbReference type="NCBI Taxonomy" id="284811"/>
    <lineage>
        <taxon>Eukaryota</taxon>
        <taxon>Fungi</taxon>
        <taxon>Dikarya</taxon>
        <taxon>Ascomycota</taxon>
        <taxon>Saccharomycotina</taxon>
        <taxon>Saccharomycetes</taxon>
        <taxon>Saccharomycetales</taxon>
        <taxon>Saccharomycetaceae</taxon>
        <taxon>Eremothecium</taxon>
    </lineage>
</organism>
<protein>
    <recommendedName>
        <fullName>ATP synthase subunit 9, mitochondrial</fullName>
    </recommendedName>
    <alternativeName>
        <fullName>Lipid-binding protein</fullName>
    </alternativeName>
</protein>